<evidence type="ECO:0000255" key="1">
    <source>
        <dbReference type="HAMAP-Rule" id="MF_00455"/>
    </source>
</evidence>
<sequence length="439" mass="49015">MATKEYFPGIGKIKFEGKDSKNPMAFRYYDAEKMINGRSMKDWLKFAMAWWHTLCAEGGDQFGGGTKQFPWNGDPDPVQAAKNKMDAGFEFMQKMGIGYYCFHDVDLVTEADSIEAYEANLKELVAYAKQKQAETGIKLLWGTANVFSHARYMNGAATNPDFDVVARAAVQIKNAIDATIELGGTNYVFWGGREGYMSLLNTDQKREKEHLAQMLTIARDYGRARGFKGTFLIEPKPMEPTKHQYDVDTETVIGFLKAHGLDQDFKVNIEVNHATLAGHTFEHELAVAVDNGMLGSIDANRGDYQNGWDTDQFPIDNFELTQAMMQIIRNDGLGNGGTNFDAKTRRNSTDPEDIFIAHIAGMDAMARALESAANLLNESPYQKMLSDRYASFDAGKGKEFEEGKLSLEELVAYAKANGEPKQTSGQQELYEALVNIYSL</sequence>
<comment type="catalytic activity">
    <reaction evidence="1">
        <text>alpha-D-xylose = alpha-D-xylulofuranose</text>
        <dbReference type="Rhea" id="RHEA:22816"/>
        <dbReference type="ChEBI" id="CHEBI:28518"/>
        <dbReference type="ChEBI" id="CHEBI:188998"/>
        <dbReference type="EC" id="5.3.1.5"/>
    </reaction>
</comment>
<comment type="cofactor">
    <cofactor evidence="1">
        <name>Mg(2+)</name>
        <dbReference type="ChEBI" id="CHEBI:18420"/>
    </cofactor>
    <text evidence="1">Binds 2 magnesium ions per subunit.</text>
</comment>
<comment type="subunit">
    <text evidence="1">Homotetramer.</text>
</comment>
<comment type="subcellular location">
    <subcellularLocation>
        <location evidence="1">Cytoplasm</location>
    </subcellularLocation>
</comment>
<comment type="similarity">
    <text evidence="1">Belongs to the xylose isomerase family.</text>
</comment>
<keyword id="KW-0119">Carbohydrate metabolism</keyword>
<keyword id="KW-0963">Cytoplasm</keyword>
<keyword id="KW-0413">Isomerase</keyword>
<keyword id="KW-0460">Magnesium</keyword>
<keyword id="KW-0479">Metal-binding</keyword>
<keyword id="KW-0859">Xylose metabolism</keyword>
<accession>Q64U20</accession>
<organism>
    <name type="scientific">Bacteroides fragilis (strain YCH46)</name>
    <dbReference type="NCBI Taxonomy" id="295405"/>
    <lineage>
        <taxon>Bacteria</taxon>
        <taxon>Pseudomonadati</taxon>
        <taxon>Bacteroidota</taxon>
        <taxon>Bacteroidia</taxon>
        <taxon>Bacteroidales</taxon>
        <taxon>Bacteroidaceae</taxon>
        <taxon>Bacteroides</taxon>
    </lineage>
</organism>
<dbReference type="EC" id="5.3.1.5" evidence="1"/>
<dbReference type="EMBL" id="AP006841">
    <property type="protein sequence ID" value="BAD49009.1"/>
    <property type="molecule type" value="Genomic_DNA"/>
</dbReference>
<dbReference type="RefSeq" id="WP_005787643.1">
    <property type="nucleotide sequence ID" value="NC_006347.1"/>
</dbReference>
<dbReference type="RefSeq" id="YP_099543.1">
    <property type="nucleotide sequence ID" value="NC_006347.1"/>
</dbReference>
<dbReference type="SMR" id="Q64U20"/>
<dbReference type="STRING" id="295405.BF2262"/>
<dbReference type="KEGG" id="bfr:BF2262"/>
<dbReference type="PATRIC" id="fig|295405.11.peg.2195"/>
<dbReference type="HOGENOM" id="CLU_037261_1_0_10"/>
<dbReference type="OrthoDB" id="9763981at2"/>
<dbReference type="Proteomes" id="UP000002197">
    <property type="component" value="Chromosome"/>
</dbReference>
<dbReference type="GO" id="GO:0005737">
    <property type="term" value="C:cytoplasm"/>
    <property type="evidence" value="ECO:0007669"/>
    <property type="project" value="UniProtKB-SubCell"/>
</dbReference>
<dbReference type="GO" id="GO:0000287">
    <property type="term" value="F:magnesium ion binding"/>
    <property type="evidence" value="ECO:0007669"/>
    <property type="project" value="UniProtKB-UniRule"/>
</dbReference>
<dbReference type="GO" id="GO:0009045">
    <property type="term" value="F:xylose isomerase activity"/>
    <property type="evidence" value="ECO:0007669"/>
    <property type="project" value="UniProtKB-UniRule"/>
</dbReference>
<dbReference type="GO" id="GO:0042732">
    <property type="term" value="P:D-xylose metabolic process"/>
    <property type="evidence" value="ECO:0007669"/>
    <property type="project" value="UniProtKB-UniRule"/>
</dbReference>
<dbReference type="FunFam" id="3.20.20.150:FF:000002">
    <property type="entry name" value="Xylose isomerase"/>
    <property type="match status" value="1"/>
</dbReference>
<dbReference type="Gene3D" id="3.20.20.150">
    <property type="entry name" value="Divalent-metal-dependent TIM barrel enzymes"/>
    <property type="match status" value="1"/>
</dbReference>
<dbReference type="HAMAP" id="MF_00455">
    <property type="entry name" value="Xylose_isom_A"/>
    <property type="match status" value="1"/>
</dbReference>
<dbReference type="InterPro" id="IPR036237">
    <property type="entry name" value="Xyl_isomerase-like_sf"/>
</dbReference>
<dbReference type="InterPro" id="IPR013022">
    <property type="entry name" value="Xyl_isomerase-like_TIM-brl"/>
</dbReference>
<dbReference type="InterPro" id="IPR013452">
    <property type="entry name" value="Xylose_isom_bac"/>
</dbReference>
<dbReference type="InterPro" id="IPR001998">
    <property type="entry name" value="Xylose_isomerase"/>
</dbReference>
<dbReference type="NCBIfam" id="NF003998">
    <property type="entry name" value="PRK05474.1"/>
    <property type="match status" value="1"/>
</dbReference>
<dbReference type="NCBIfam" id="TIGR02630">
    <property type="entry name" value="xylose_isom_A"/>
    <property type="match status" value="1"/>
</dbReference>
<dbReference type="PANTHER" id="PTHR48408">
    <property type="match status" value="1"/>
</dbReference>
<dbReference type="PANTHER" id="PTHR48408:SF1">
    <property type="entry name" value="XYLOSE ISOMERASE"/>
    <property type="match status" value="1"/>
</dbReference>
<dbReference type="Pfam" id="PF01261">
    <property type="entry name" value="AP_endonuc_2"/>
    <property type="match status" value="1"/>
</dbReference>
<dbReference type="PRINTS" id="PR00688">
    <property type="entry name" value="XYLOSISMRASE"/>
</dbReference>
<dbReference type="SUPFAM" id="SSF51658">
    <property type="entry name" value="Xylose isomerase-like"/>
    <property type="match status" value="1"/>
</dbReference>
<dbReference type="PROSITE" id="PS51415">
    <property type="entry name" value="XYLOSE_ISOMERASE"/>
    <property type="match status" value="1"/>
</dbReference>
<reference key="1">
    <citation type="journal article" date="2004" name="Proc. Natl. Acad. Sci. U.S.A.">
        <title>Genomic analysis of Bacteroides fragilis reveals extensive DNA inversions regulating cell surface adaptation.</title>
        <authorList>
            <person name="Kuwahara T."/>
            <person name="Yamashita A."/>
            <person name="Hirakawa H."/>
            <person name="Nakayama H."/>
            <person name="Toh H."/>
            <person name="Okada N."/>
            <person name="Kuhara S."/>
            <person name="Hattori M."/>
            <person name="Hayashi T."/>
            <person name="Ohnishi Y."/>
        </authorList>
    </citation>
    <scope>NUCLEOTIDE SEQUENCE [LARGE SCALE GENOMIC DNA]</scope>
    <source>
        <strain>YCH46</strain>
    </source>
</reference>
<proteinExistence type="inferred from homology"/>
<name>XYLA_BACFR</name>
<feature type="chain" id="PRO_0000236956" description="Xylose isomerase">
    <location>
        <begin position="1"/>
        <end position="439"/>
    </location>
</feature>
<feature type="active site" evidence="1">
    <location>
        <position position="103"/>
    </location>
</feature>
<feature type="active site" evidence="1">
    <location>
        <position position="106"/>
    </location>
</feature>
<feature type="binding site" evidence="1">
    <location>
        <position position="234"/>
    </location>
    <ligand>
        <name>Mg(2+)</name>
        <dbReference type="ChEBI" id="CHEBI:18420"/>
        <label>1</label>
    </ligand>
</feature>
<feature type="binding site" evidence="1">
    <location>
        <position position="270"/>
    </location>
    <ligand>
        <name>Mg(2+)</name>
        <dbReference type="ChEBI" id="CHEBI:18420"/>
        <label>1</label>
    </ligand>
</feature>
<feature type="binding site" evidence="1">
    <location>
        <position position="270"/>
    </location>
    <ligand>
        <name>Mg(2+)</name>
        <dbReference type="ChEBI" id="CHEBI:18420"/>
        <label>2</label>
    </ligand>
</feature>
<feature type="binding site" evidence="1">
    <location>
        <position position="273"/>
    </location>
    <ligand>
        <name>Mg(2+)</name>
        <dbReference type="ChEBI" id="CHEBI:18420"/>
        <label>2</label>
    </ligand>
</feature>
<feature type="binding site" evidence="1">
    <location>
        <position position="298"/>
    </location>
    <ligand>
        <name>Mg(2+)</name>
        <dbReference type="ChEBI" id="CHEBI:18420"/>
        <label>1</label>
    </ligand>
</feature>
<feature type="binding site" evidence="1">
    <location>
        <position position="309"/>
    </location>
    <ligand>
        <name>Mg(2+)</name>
        <dbReference type="ChEBI" id="CHEBI:18420"/>
        <label>2</label>
    </ligand>
</feature>
<feature type="binding site" evidence="1">
    <location>
        <position position="311"/>
    </location>
    <ligand>
        <name>Mg(2+)</name>
        <dbReference type="ChEBI" id="CHEBI:18420"/>
        <label>2</label>
    </ligand>
</feature>
<feature type="binding site" evidence="1">
    <location>
        <position position="341"/>
    </location>
    <ligand>
        <name>Mg(2+)</name>
        <dbReference type="ChEBI" id="CHEBI:18420"/>
        <label>1</label>
    </ligand>
</feature>
<gene>
    <name evidence="1" type="primary">xylA</name>
    <name type="ordered locus">BF2262</name>
</gene>
<protein>
    <recommendedName>
        <fullName evidence="1">Xylose isomerase</fullName>
        <ecNumber evidence="1">5.3.1.5</ecNumber>
    </recommendedName>
</protein>